<keyword id="KW-0010">Activator</keyword>
<keyword id="KW-0238">DNA-binding</keyword>
<keyword id="KW-0804">Transcription</keyword>
<keyword id="KW-0805">Transcription regulation</keyword>
<comment type="function">
    <text evidence="1">Activates ribosomal RNA transcription. Plays a direct role in upstream activation of rRNA promoters.</text>
</comment>
<comment type="subunit">
    <text evidence="1">Homodimer.</text>
</comment>
<comment type="similarity">
    <text evidence="1">Belongs to the transcriptional regulatory Fis family.</text>
</comment>
<name>FIS_HISS2</name>
<feature type="chain" id="PRO_1000076981" description="DNA-binding protein Fis">
    <location>
        <begin position="1"/>
        <end position="98"/>
    </location>
</feature>
<feature type="DNA-binding region" description="H-T-H motif" evidence="1">
    <location>
        <begin position="74"/>
        <end position="93"/>
    </location>
</feature>
<gene>
    <name evidence="1" type="primary">fis</name>
    <name type="ordered locus">HSM_1610</name>
</gene>
<proteinExistence type="inferred from homology"/>
<accession>B0UV86</accession>
<protein>
    <recommendedName>
        <fullName evidence="1">DNA-binding protein Fis</fullName>
    </recommendedName>
</protein>
<sequence length="98" mass="11109">MLEQRNPAEALTVSVLNSQSQVTNKPLRDSVKQALRNYLSQLDGQDVNDLYELVLAEVEHPMLDMIMQYTRGNQTRAATMLGINRGTLRKKLKKYGMG</sequence>
<organism>
    <name type="scientific">Histophilus somni (strain 2336)</name>
    <name type="common">Haemophilus somnus</name>
    <dbReference type="NCBI Taxonomy" id="228400"/>
    <lineage>
        <taxon>Bacteria</taxon>
        <taxon>Pseudomonadati</taxon>
        <taxon>Pseudomonadota</taxon>
        <taxon>Gammaproteobacteria</taxon>
        <taxon>Pasteurellales</taxon>
        <taxon>Pasteurellaceae</taxon>
        <taxon>Histophilus</taxon>
    </lineage>
</organism>
<reference key="1">
    <citation type="submission" date="2008-02" db="EMBL/GenBank/DDBJ databases">
        <title>Complete sequence of Haemophilus somnus 2336.</title>
        <authorList>
            <consortium name="US DOE Joint Genome Institute"/>
            <person name="Siddaramappa S."/>
            <person name="Duncan A.J."/>
            <person name="Challacombe J.F."/>
            <person name="Rainey D."/>
            <person name="Gillaspy A.F."/>
            <person name="Carson M."/>
            <person name="Gipson J."/>
            <person name="Gipson M."/>
            <person name="Bruce D."/>
            <person name="Detter J.C."/>
            <person name="Han C.S."/>
            <person name="Land M."/>
            <person name="Tapia R."/>
            <person name="Thompson L.S."/>
            <person name="Orvis J."/>
            <person name="Zaitshik J."/>
            <person name="Barnes G."/>
            <person name="Brettin T.S."/>
            <person name="Dyer D.W."/>
            <person name="Inzana T.J."/>
        </authorList>
    </citation>
    <scope>NUCLEOTIDE SEQUENCE [LARGE SCALE GENOMIC DNA]</scope>
    <source>
        <strain>2336</strain>
    </source>
</reference>
<dbReference type="EMBL" id="CP000947">
    <property type="protein sequence ID" value="ACA31375.1"/>
    <property type="molecule type" value="Genomic_DNA"/>
</dbReference>
<dbReference type="RefSeq" id="WP_011608721.1">
    <property type="nucleotide sequence ID" value="NC_010519.1"/>
</dbReference>
<dbReference type="SMR" id="B0UV86"/>
<dbReference type="STRING" id="228400.HSM_1610"/>
<dbReference type="GeneID" id="31487914"/>
<dbReference type="KEGG" id="hsm:HSM_1610"/>
<dbReference type="HOGENOM" id="CLU_158040_3_0_6"/>
<dbReference type="GO" id="GO:0003700">
    <property type="term" value="F:DNA-binding transcription factor activity"/>
    <property type="evidence" value="ECO:0007669"/>
    <property type="project" value="UniProtKB-UniRule"/>
</dbReference>
<dbReference type="GO" id="GO:0043565">
    <property type="term" value="F:sequence-specific DNA binding"/>
    <property type="evidence" value="ECO:0007669"/>
    <property type="project" value="InterPro"/>
</dbReference>
<dbReference type="FunFam" id="1.10.10.60:FF:000006">
    <property type="entry name" value="DNA-binding protein Fis"/>
    <property type="match status" value="1"/>
</dbReference>
<dbReference type="Gene3D" id="1.10.10.60">
    <property type="entry name" value="Homeodomain-like"/>
    <property type="match status" value="1"/>
</dbReference>
<dbReference type="HAMAP" id="MF_00166">
    <property type="entry name" value="DNA_binding_Fis"/>
    <property type="match status" value="1"/>
</dbReference>
<dbReference type="InterPro" id="IPR005412">
    <property type="entry name" value="Fis_DNA-bd"/>
</dbReference>
<dbReference type="InterPro" id="IPR009057">
    <property type="entry name" value="Homeodomain-like_sf"/>
</dbReference>
<dbReference type="InterPro" id="IPR002197">
    <property type="entry name" value="HTH_Fis"/>
</dbReference>
<dbReference type="InterPro" id="IPR050207">
    <property type="entry name" value="Trans_regulatory_Fis"/>
</dbReference>
<dbReference type="NCBIfam" id="NF001659">
    <property type="entry name" value="PRK00430.1"/>
    <property type="match status" value="1"/>
</dbReference>
<dbReference type="PANTHER" id="PTHR47918">
    <property type="entry name" value="DNA-BINDING PROTEIN FIS"/>
    <property type="match status" value="1"/>
</dbReference>
<dbReference type="PANTHER" id="PTHR47918:SF1">
    <property type="entry name" value="DNA-BINDING PROTEIN FIS"/>
    <property type="match status" value="1"/>
</dbReference>
<dbReference type="Pfam" id="PF02954">
    <property type="entry name" value="HTH_8"/>
    <property type="match status" value="1"/>
</dbReference>
<dbReference type="PIRSF" id="PIRSF002097">
    <property type="entry name" value="DNA-binding_Fis"/>
    <property type="match status" value="1"/>
</dbReference>
<dbReference type="PRINTS" id="PR01591">
    <property type="entry name" value="DNABINDNGFIS"/>
</dbReference>
<dbReference type="PRINTS" id="PR01590">
    <property type="entry name" value="HTHFIS"/>
</dbReference>
<dbReference type="SUPFAM" id="SSF46689">
    <property type="entry name" value="Homeodomain-like"/>
    <property type="match status" value="1"/>
</dbReference>
<evidence type="ECO:0000255" key="1">
    <source>
        <dbReference type="HAMAP-Rule" id="MF_00166"/>
    </source>
</evidence>